<feature type="chain" id="PRO_0000047265" description="Zinc finger Y-chromosomal protein">
    <location>
        <begin position="1" status="less than"/>
        <end position="148" status="greater than"/>
    </location>
</feature>
<feature type="zinc finger region" description="C2H2-type 1" evidence="2">
    <location>
        <begin position="16"/>
        <end position="38"/>
    </location>
</feature>
<feature type="zinc finger region" description="C2H2-type 2" evidence="2">
    <location>
        <begin position="76"/>
        <end position="98"/>
    </location>
</feature>
<feature type="non-terminal residue">
    <location>
        <position position="1"/>
    </location>
</feature>
<feature type="non-terminal residue">
    <location>
        <position position="148"/>
    </location>
</feature>
<sequence>NHMESHKLTSKAEKAIECDECGKHFSHAGALFTHKMVHKEKGANKMHKCKFCEYETAEQGLLNRHLLAVHSKNFPHICVECGKGFRHPSELKKHMRIHTGEKPYQCQYCEYRSADSSNLKTHVKTKHSKEMPFKCDICLLTFSDTKEV</sequence>
<accession>Q29419</accession>
<evidence type="ECO:0000250" key="1"/>
<evidence type="ECO:0000255" key="2">
    <source>
        <dbReference type="PROSITE-ProRule" id="PRU00042"/>
    </source>
</evidence>
<evidence type="ECO:0000305" key="3"/>
<keyword id="KW-0010">Activator</keyword>
<keyword id="KW-0238">DNA-binding</keyword>
<keyword id="KW-0479">Metal-binding</keyword>
<keyword id="KW-0539">Nucleus</keyword>
<keyword id="KW-1185">Reference proteome</keyword>
<keyword id="KW-0677">Repeat</keyword>
<keyword id="KW-0804">Transcription</keyword>
<keyword id="KW-0805">Transcription regulation</keyword>
<keyword id="KW-0862">Zinc</keyword>
<keyword id="KW-0863">Zinc-finger</keyword>
<protein>
    <recommendedName>
        <fullName>Zinc finger Y-chromosomal protein</fullName>
    </recommendedName>
</protein>
<dbReference type="EMBL" id="X75511">
    <property type="protein sequence ID" value="CAA53222.1"/>
    <property type="molecule type" value="Genomic_DNA"/>
</dbReference>
<dbReference type="PIR" id="S38660">
    <property type="entry name" value="S38660"/>
</dbReference>
<dbReference type="SMR" id="Q29419"/>
<dbReference type="InParanoid" id="Q29419"/>
<dbReference type="Proteomes" id="UP000008227">
    <property type="component" value="Unplaced"/>
</dbReference>
<dbReference type="Proteomes" id="UP000314985">
    <property type="component" value="Unplaced"/>
</dbReference>
<dbReference type="Proteomes" id="UP000694570">
    <property type="component" value="Unplaced"/>
</dbReference>
<dbReference type="Proteomes" id="UP000694571">
    <property type="component" value="Unplaced"/>
</dbReference>
<dbReference type="Proteomes" id="UP000694720">
    <property type="component" value="Unplaced"/>
</dbReference>
<dbReference type="Proteomes" id="UP000694722">
    <property type="component" value="Unplaced"/>
</dbReference>
<dbReference type="Proteomes" id="UP000694723">
    <property type="component" value="Unplaced"/>
</dbReference>
<dbReference type="Proteomes" id="UP000694724">
    <property type="component" value="Unplaced"/>
</dbReference>
<dbReference type="Proteomes" id="UP000694725">
    <property type="component" value="Unplaced"/>
</dbReference>
<dbReference type="Proteomes" id="UP000694726">
    <property type="component" value="Unplaced"/>
</dbReference>
<dbReference type="Proteomes" id="UP000694727">
    <property type="component" value="Unplaced"/>
</dbReference>
<dbReference type="Proteomes" id="UP000694728">
    <property type="component" value="Unplaced"/>
</dbReference>
<dbReference type="GO" id="GO:0005634">
    <property type="term" value="C:nucleus"/>
    <property type="evidence" value="ECO:0007669"/>
    <property type="project" value="UniProtKB-SubCell"/>
</dbReference>
<dbReference type="GO" id="GO:0003677">
    <property type="term" value="F:DNA binding"/>
    <property type="evidence" value="ECO:0007669"/>
    <property type="project" value="UniProtKB-KW"/>
</dbReference>
<dbReference type="GO" id="GO:0008270">
    <property type="term" value="F:zinc ion binding"/>
    <property type="evidence" value="ECO:0007669"/>
    <property type="project" value="UniProtKB-KW"/>
</dbReference>
<dbReference type="FunFam" id="3.30.160.60:FF:000054">
    <property type="entry name" value="Zinc finger protein 711"/>
    <property type="match status" value="1"/>
</dbReference>
<dbReference type="FunFam" id="3.30.160.60:FF:000170">
    <property type="entry name" value="Zinc finger protein 711 isoform X2"/>
    <property type="match status" value="1"/>
</dbReference>
<dbReference type="FunFam" id="3.30.160.60:FF:000607">
    <property type="entry name" value="zinc finger X-chromosomal protein-like isoform X1"/>
    <property type="match status" value="1"/>
</dbReference>
<dbReference type="Gene3D" id="3.30.160.60">
    <property type="entry name" value="Classic Zinc Finger"/>
    <property type="match status" value="3"/>
</dbReference>
<dbReference type="InterPro" id="IPR050527">
    <property type="entry name" value="Snail/Krueppel_Znf"/>
</dbReference>
<dbReference type="InterPro" id="IPR036236">
    <property type="entry name" value="Znf_C2H2_sf"/>
</dbReference>
<dbReference type="InterPro" id="IPR013087">
    <property type="entry name" value="Znf_C2H2_type"/>
</dbReference>
<dbReference type="PANTHER" id="PTHR24388">
    <property type="entry name" value="ZINC FINGER PROTEIN"/>
    <property type="match status" value="1"/>
</dbReference>
<dbReference type="PANTHER" id="PTHR24388:SF73">
    <property type="entry name" value="ZINC FINGER PROTEIN ZFAT"/>
    <property type="match status" value="1"/>
</dbReference>
<dbReference type="Pfam" id="PF00096">
    <property type="entry name" value="zf-C2H2"/>
    <property type="match status" value="2"/>
</dbReference>
<dbReference type="Pfam" id="PF13909">
    <property type="entry name" value="zf-H2C2_5"/>
    <property type="match status" value="1"/>
</dbReference>
<dbReference type="SMART" id="SM00355">
    <property type="entry name" value="ZnF_C2H2"/>
    <property type="match status" value="4"/>
</dbReference>
<dbReference type="SUPFAM" id="SSF57667">
    <property type="entry name" value="beta-beta-alpha zinc fingers"/>
    <property type="match status" value="3"/>
</dbReference>
<dbReference type="PROSITE" id="PS00028">
    <property type="entry name" value="ZINC_FINGER_C2H2_1"/>
    <property type="match status" value="2"/>
</dbReference>
<dbReference type="PROSITE" id="PS50157">
    <property type="entry name" value="ZINC_FINGER_C2H2_2"/>
    <property type="match status" value="4"/>
</dbReference>
<gene>
    <name type="primary">ZFY</name>
</gene>
<reference key="1">
    <citation type="journal article" date="1997" name="Theriogenology">
        <title>Relevance of intersexuality to breeding and reproductive biotechnology programs; XX sex reversal in pigs.</title>
        <authorList>
            <person name="Pailhoux E.A."/>
            <person name="Pelliniemi L."/>
            <person name="Barbos A."/>
            <person name="Parma P."/>
            <person name="Kuopio T."/>
            <person name="Cotinot C.Y."/>
        </authorList>
    </citation>
    <scope>NUCLEOTIDE SEQUENCE [GENOMIC DNA]</scope>
    <source>
        <tissue>Lymphocyte</tissue>
    </source>
</reference>
<name>ZFY_PIG</name>
<organism>
    <name type="scientific">Sus scrofa</name>
    <name type="common">Pig</name>
    <dbReference type="NCBI Taxonomy" id="9823"/>
    <lineage>
        <taxon>Eukaryota</taxon>
        <taxon>Metazoa</taxon>
        <taxon>Chordata</taxon>
        <taxon>Craniata</taxon>
        <taxon>Vertebrata</taxon>
        <taxon>Euteleostomi</taxon>
        <taxon>Mammalia</taxon>
        <taxon>Eutheria</taxon>
        <taxon>Laurasiatheria</taxon>
        <taxon>Artiodactyla</taxon>
        <taxon>Suina</taxon>
        <taxon>Suidae</taxon>
        <taxon>Sus</taxon>
    </lineage>
</organism>
<proteinExistence type="inferred from homology"/>
<comment type="function">
    <text evidence="1">Probable transcriptional activator. Binds to the consensus sequence 5'-AGGCCY-3' (By similarity).</text>
</comment>
<comment type="subcellular location">
    <subcellularLocation>
        <location>Nucleus</location>
    </subcellularLocation>
</comment>
<comment type="domain">
    <text evidence="1">The binding of ZFY to DNA is mediated by the interaction of the GGCC core base pairs with zinc fingers 12 and 13.</text>
</comment>
<comment type="similarity">
    <text evidence="3">Belongs to the krueppel C2H2-type zinc-finger protein family. ZFX/ZFY subfamily.</text>
</comment>